<dbReference type="EMBL" id="CP000680">
    <property type="protein sequence ID" value="ABP85150.1"/>
    <property type="molecule type" value="Genomic_DNA"/>
</dbReference>
<dbReference type="SMR" id="A4XUY4"/>
<dbReference type="STRING" id="399739.Pmen_2394"/>
<dbReference type="KEGG" id="pmy:Pmen_2394"/>
<dbReference type="PATRIC" id="fig|399739.8.peg.2415"/>
<dbReference type="eggNOG" id="COG2127">
    <property type="taxonomic scope" value="Bacteria"/>
</dbReference>
<dbReference type="HOGENOM" id="CLU_134358_2_0_6"/>
<dbReference type="OrthoDB" id="9796121at2"/>
<dbReference type="GO" id="GO:0030163">
    <property type="term" value="P:protein catabolic process"/>
    <property type="evidence" value="ECO:0007669"/>
    <property type="project" value="InterPro"/>
</dbReference>
<dbReference type="GO" id="GO:0006508">
    <property type="term" value="P:proteolysis"/>
    <property type="evidence" value="ECO:0007669"/>
    <property type="project" value="UniProtKB-UniRule"/>
</dbReference>
<dbReference type="FunFam" id="3.30.1390.10:FF:000002">
    <property type="entry name" value="ATP-dependent Clp protease adapter protein ClpS"/>
    <property type="match status" value="1"/>
</dbReference>
<dbReference type="Gene3D" id="3.30.1390.10">
    <property type="match status" value="1"/>
</dbReference>
<dbReference type="HAMAP" id="MF_00302">
    <property type="entry name" value="ClpS"/>
    <property type="match status" value="1"/>
</dbReference>
<dbReference type="InterPro" id="IPR022935">
    <property type="entry name" value="ClpS"/>
</dbReference>
<dbReference type="InterPro" id="IPR003769">
    <property type="entry name" value="ClpS_core"/>
</dbReference>
<dbReference type="InterPro" id="IPR014719">
    <property type="entry name" value="Ribosomal_bL12_C/ClpS-like"/>
</dbReference>
<dbReference type="NCBIfam" id="NF000669">
    <property type="entry name" value="PRK00033.1-2"/>
    <property type="match status" value="1"/>
</dbReference>
<dbReference type="NCBIfam" id="NF000672">
    <property type="entry name" value="PRK00033.1-5"/>
    <property type="match status" value="1"/>
</dbReference>
<dbReference type="PANTHER" id="PTHR33473:SF19">
    <property type="entry name" value="ATP-DEPENDENT CLP PROTEASE ADAPTER PROTEIN CLPS"/>
    <property type="match status" value="1"/>
</dbReference>
<dbReference type="PANTHER" id="PTHR33473">
    <property type="entry name" value="ATP-DEPENDENT CLP PROTEASE ADAPTER PROTEIN CLPS1, CHLOROPLASTIC"/>
    <property type="match status" value="1"/>
</dbReference>
<dbReference type="Pfam" id="PF02617">
    <property type="entry name" value="ClpS"/>
    <property type="match status" value="1"/>
</dbReference>
<dbReference type="SUPFAM" id="SSF54736">
    <property type="entry name" value="ClpS-like"/>
    <property type="match status" value="1"/>
</dbReference>
<proteinExistence type="inferred from homology"/>
<protein>
    <recommendedName>
        <fullName evidence="1">ATP-dependent Clp protease adapter protein ClpS</fullName>
    </recommendedName>
</protein>
<sequence>MHASSQIRLTFNQDHPAEHEDDSSGIAVQESKPALQAPPMYKVVLFNDDYTPMDFVVEVLETFFGMNRELATKIMLTVHTEGRAVCGVYTRDIAETKAMQVNQYARESQHPLLCEIEKDG</sequence>
<evidence type="ECO:0000255" key="1">
    <source>
        <dbReference type="HAMAP-Rule" id="MF_00302"/>
    </source>
</evidence>
<evidence type="ECO:0000256" key="2">
    <source>
        <dbReference type="SAM" id="MobiDB-lite"/>
    </source>
</evidence>
<comment type="function">
    <text evidence="1">Involved in the modulation of the specificity of the ClpAP-mediated ATP-dependent protein degradation.</text>
</comment>
<comment type="subunit">
    <text evidence="1">Binds to the N-terminal domain of the chaperone ClpA.</text>
</comment>
<comment type="similarity">
    <text evidence="1">Belongs to the ClpS family.</text>
</comment>
<reference key="1">
    <citation type="submission" date="2007-04" db="EMBL/GenBank/DDBJ databases">
        <title>Complete sequence of Pseudomonas mendocina ymp.</title>
        <authorList>
            <consortium name="US DOE Joint Genome Institute"/>
            <person name="Copeland A."/>
            <person name="Lucas S."/>
            <person name="Lapidus A."/>
            <person name="Barry K."/>
            <person name="Glavina del Rio T."/>
            <person name="Dalin E."/>
            <person name="Tice H."/>
            <person name="Pitluck S."/>
            <person name="Kiss H."/>
            <person name="Brettin T."/>
            <person name="Detter J.C."/>
            <person name="Bruce D."/>
            <person name="Han C."/>
            <person name="Schmutz J."/>
            <person name="Larimer F."/>
            <person name="Land M."/>
            <person name="Hauser L."/>
            <person name="Kyrpides N."/>
            <person name="Mikhailova N."/>
            <person name="Hersman L."/>
            <person name="Dubois J."/>
            <person name="Maurice P."/>
            <person name="Richardson P."/>
        </authorList>
    </citation>
    <scope>NUCLEOTIDE SEQUENCE [LARGE SCALE GENOMIC DNA]</scope>
    <source>
        <strain>ymp</strain>
    </source>
</reference>
<organism>
    <name type="scientific">Ectopseudomonas mendocina (strain ymp)</name>
    <name type="common">Pseudomonas mendocina</name>
    <dbReference type="NCBI Taxonomy" id="399739"/>
    <lineage>
        <taxon>Bacteria</taxon>
        <taxon>Pseudomonadati</taxon>
        <taxon>Pseudomonadota</taxon>
        <taxon>Gammaproteobacteria</taxon>
        <taxon>Pseudomonadales</taxon>
        <taxon>Pseudomonadaceae</taxon>
        <taxon>Ectopseudomonas</taxon>
    </lineage>
</organism>
<accession>A4XUY4</accession>
<name>CLPS_ECTM1</name>
<gene>
    <name evidence="1" type="primary">clpS</name>
    <name type="ordered locus">Pmen_2394</name>
</gene>
<feature type="chain" id="PRO_1000022616" description="ATP-dependent Clp protease adapter protein ClpS">
    <location>
        <begin position="1"/>
        <end position="120"/>
    </location>
</feature>
<feature type="region of interest" description="Disordered" evidence="2">
    <location>
        <begin position="9"/>
        <end position="32"/>
    </location>
</feature>